<organism>
    <name type="scientific">Streptococcus mutans serotype c (strain ATCC 700610 / UA159)</name>
    <dbReference type="NCBI Taxonomy" id="210007"/>
    <lineage>
        <taxon>Bacteria</taxon>
        <taxon>Bacillati</taxon>
        <taxon>Bacillota</taxon>
        <taxon>Bacilli</taxon>
        <taxon>Lactobacillales</taxon>
        <taxon>Streptococcaceae</taxon>
        <taxon>Streptococcus</taxon>
    </lineage>
</organism>
<keyword id="KW-1185">Reference proteome</keyword>
<keyword id="KW-0687">Ribonucleoprotein</keyword>
<keyword id="KW-0689">Ribosomal protein</keyword>
<keyword id="KW-0694">RNA-binding</keyword>
<keyword id="KW-0699">rRNA-binding</keyword>
<keyword id="KW-0820">tRNA-binding</keyword>
<dbReference type="EMBL" id="AE014133">
    <property type="protein sequence ID" value="AAN58116.1"/>
    <property type="molecule type" value="Genomic_DNA"/>
</dbReference>
<dbReference type="RefSeq" id="NP_720810.1">
    <property type="nucleotide sequence ID" value="NC_004350.2"/>
</dbReference>
<dbReference type="RefSeq" id="WP_002262491.1">
    <property type="nucleotide sequence ID" value="NC_004350.2"/>
</dbReference>
<dbReference type="SMR" id="Q8DVV5"/>
<dbReference type="STRING" id="210007.SMU_358"/>
<dbReference type="GeneID" id="93860063"/>
<dbReference type="KEGG" id="smu:SMU_358"/>
<dbReference type="PATRIC" id="fig|210007.7.peg.312"/>
<dbReference type="eggNOG" id="COG0049">
    <property type="taxonomic scope" value="Bacteria"/>
</dbReference>
<dbReference type="HOGENOM" id="CLU_072226_1_1_9"/>
<dbReference type="OrthoDB" id="9807653at2"/>
<dbReference type="PhylomeDB" id="Q8DVV5"/>
<dbReference type="Proteomes" id="UP000002512">
    <property type="component" value="Chromosome"/>
</dbReference>
<dbReference type="GO" id="GO:0015935">
    <property type="term" value="C:small ribosomal subunit"/>
    <property type="evidence" value="ECO:0007669"/>
    <property type="project" value="InterPro"/>
</dbReference>
<dbReference type="GO" id="GO:0019843">
    <property type="term" value="F:rRNA binding"/>
    <property type="evidence" value="ECO:0007669"/>
    <property type="project" value="UniProtKB-UniRule"/>
</dbReference>
<dbReference type="GO" id="GO:0003735">
    <property type="term" value="F:structural constituent of ribosome"/>
    <property type="evidence" value="ECO:0007669"/>
    <property type="project" value="InterPro"/>
</dbReference>
<dbReference type="GO" id="GO:0000049">
    <property type="term" value="F:tRNA binding"/>
    <property type="evidence" value="ECO:0007669"/>
    <property type="project" value="UniProtKB-UniRule"/>
</dbReference>
<dbReference type="GO" id="GO:0006412">
    <property type="term" value="P:translation"/>
    <property type="evidence" value="ECO:0007669"/>
    <property type="project" value="UniProtKB-UniRule"/>
</dbReference>
<dbReference type="CDD" id="cd14869">
    <property type="entry name" value="uS7_Bacteria"/>
    <property type="match status" value="1"/>
</dbReference>
<dbReference type="FunFam" id="1.10.455.10:FF:000001">
    <property type="entry name" value="30S ribosomal protein S7"/>
    <property type="match status" value="1"/>
</dbReference>
<dbReference type="Gene3D" id="1.10.455.10">
    <property type="entry name" value="Ribosomal protein S7 domain"/>
    <property type="match status" value="1"/>
</dbReference>
<dbReference type="HAMAP" id="MF_00480_B">
    <property type="entry name" value="Ribosomal_uS7_B"/>
    <property type="match status" value="1"/>
</dbReference>
<dbReference type="InterPro" id="IPR000235">
    <property type="entry name" value="Ribosomal_uS7"/>
</dbReference>
<dbReference type="InterPro" id="IPR005717">
    <property type="entry name" value="Ribosomal_uS7_bac/org-type"/>
</dbReference>
<dbReference type="InterPro" id="IPR020606">
    <property type="entry name" value="Ribosomal_uS7_CS"/>
</dbReference>
<dbReference type="InterPro" id="IPR023798">
    <property type="entry name" value="Ribosomal_uS7_dom"/>
</dbReference>
<dbReference type="InterPro" id="IPR036823">
    <property type="entry name" value="Ribosomal_uS7_dom_sf"/>
</dbReference>
<dbReference type="NCBIfam" id="TIGR01029">
    <property type="entry name" value="rpsG_bact"/>
    <property type="match status" value="1"/>
</dbReference>
<dbReference type="PANTHER" id="PTHR11205">
    <property type="entry name" value="RIBOSOMAL PROTEIN S7"/>
    <property type="match status" value="1"/>
</dbReference>
<dbReference type="Pfam" id="PF00177">
    <property type="entry name" value="Ribosomal_S7"/>
    <property type="match status" value="1"/>
</dbReference>
<dbReference type="PIRSF" id="PIRSF002122">
    <property type="entry name" value="RPS7p_RPS7a_RPS5e_RPS7o"/>
    <property type="match status" value="1"/>
</dbReference>
<dbReference type="SUPFAM" id="SSF47973">
    <property type="entry name" value="Ribosomal protein S7"/>
    <property type="match status" value="1"/>
</dbReference>
<dbReference type="PROSITE" id="PS00052">
    <property type="entry name" value="RIBOSOMAL_S7"/>
    <property type="match status" value="1"/>
</dbReference>
<proteinExistence type="inferred from homology"/>
<feature type="chain" id="PRO_0000124354" description="Small ribosomal subunit protein uS7">
    <location>
        <begin position="1"/>
        <end position="156"/>
    </location>
</feature>
<comment type="function">
    <text evidence="1">One of the primary rRNA binding proteins, it binds directly to 16S rRNA where it nucleates assembly of the head domain of the 30S subunit. Is located at the subunit interface close to the decoding center, probably blocks exit of the E-site tRNA.</text>
</comment>
<comment type="subunit">
    <text evidence="1">Part of the 30S ribosomal subunit. Contacts proteins S9 and S11.</text>
</comment>
<comment type="similarity">
    <text evidence="1">Belongs to the universal ribosomal protein uS7 family.</text>
</comment>
<accession>Q8DVV5</accession>
<gene>
    <name evidence="1" type="primary">rpsG</name>
    <name type="ordered locus">SMU_358</name>
</gene>
<sequence>MSRKNRAPKREVLPDPLYNSKLVTRLINRIMLDGKRGTAASIVYGAFEQIKEATGNDALEVFEQAMENIMPVLEVRARRVGGSNYQVPVEVRPERRTTLGLRWLVTASRTRGEHTMKDRLAKEILDASNNTGASVKKREDTHRMAEANRAFAHFRW</sequence>
<evidence type="ECO:0000255" key="1">
    <source>
        <dbReference type="HAMAP-Rule" id="MF_00480"/>
    </source>
</evidence>
<evidence type="ECO:0000305" key="2"/>
<reference key="1">
    <citation type="journal article" date="2002" name="Proc. Natl. Acad. Sci. U.S.A.">
        <title>Genome sequence of Streptococcus mutans UA159, a cariogenic dental pathogen.</title>
        <authorList>
            <person name="Ajdic D.J."/>
            <person name="McShan W.M."/>
            <person name="McLaughlin R.E."/>
            <person name="Savic G."/>
            <person name="Chang J."/>
            <person name="Carson M.B."/>
            <person name="Primeaux C."/>
            <person name="Tian R."/>
            <person name="Kenton S."/>
            <person name="Jia H.G."/>
            <person name="Lin S.P."/>
            <person name="Qian Y."/>
            <person name="Li S."/>
            <person name="Zhu H."/>
            <person name="Najar F.Z."/>
            <person name="Lai H."/>
            <person name="White J."/>
            <person name="Roe B.A."/>
            <person name="Ferretti J.J."/>
        </authorList>
    </citation>
    <scope>NUCLEOTIDE SEQUENCE [LARGE SCALE GENOMIC DNA]</scope>
    <source>
        <strain>ATCC 700610 / UA159</strain>
    </source>
</reference>
<name>RS7_STRMU</name>
<protein>
    <recommendedName>
        <fullName evidence="1">Small ribosomal subunit protein uS7</fullName>
    </recommendedName>
    <alternativeName>
        <fullName evidence="2">30S ribosomal protein S7</fullName>
    </alternativeName>
</protein>